<sequence>MSHHWGYGKHNGPEHWHKDFPIANGERQSPIDIDTNAAKHDPSLKPLRVCYEHPISRRIINNGHSFNVEFDDSHDKTVLKEGPLEGTYRLIQFHFHWGSSDGQGSEHTVNKKKYAAELHLVHWNTKYGDFGKAVKHPDGLAVLGIFLKIGSATPGLQKVVDTLSSIKTKGKSVDFTDFDPRGLLPESLDYWTYPGSLTTPPLLECVTWIVLKEPITVSSEQMLKFRNLNFNKEAEPEEPMVDNWRPTQPLKGRQVKASFV</sequence>
<protein>
    <recommendedName>
        <fullName>Carbonic anhydrase 2</fullName>
        <ecNumber evidence="1">4.2.1.1</ecNumber>
    </recommendedName>
    <alternativeName>
        <fullName>Carbonate dehydratase II</fullName>
    </alternativeName>
    <alternativeName>
        <fullName>Carbonic anhydrase II</fullName>
        <shortName>CA-II</shortName>
    </alternativeName>
    <alternativeName>
        <fullName>Cyanamide hydratase CA2</fullName>
        <ecNumber evidence="1">4.2.1.69</ecNumber>
    </alternativeName>
</protein>
<accession>P00919</accession>
<dbReference type="EC" id="4.2.1.1" evidence="1"/>
<dbReference type="EC" id="4.2.1.69" evidence="1"/>
<dbReference type="EMBL" id="M98395">
    <property type="protein sequence ID" value="AAA80531.1"/>
    <property type="molecule type" value="mRNA"/>
</dbReference>
<dbReference type="PIR" id="A01142">
    <property type="entry name" value="CRRB2"/>
</dbReference>
<dbReference type="RefSeq" id="NP_001182637.1">
    <property type="nucleotide sequence ID" value="NM_001195708.1"/>
</dbReference>
<dbReference type="SMR" id="P00919"/>
<dbReference type="FunCoup" id="P00919">
    <property type="interactions" value="143"/>
</dbReference>
<dbReference type="STRING" id="9986.ENSOCUP00000032692"/>
<dbReference type="PaxDb" id="9986-ENSOCUP00000010096"/>
<dbReference type="Ensembl" id="ENSOCUT00000011742.4">
    <property type="protein sequence ID" value="ENSOCUP00000010096.2"/>
    <property type="gene ID" value="ENSOCUG00000011742.4"/>
</dbReference>
<dbReference type="GeneID" id="100009156"/>
<dbReference type="KEGG" id="ocu:100009156"/>
<dbReference type="CTD" id="760"/>
<dbReference type="eggNOG" id="KOG0382">
    <property type="taxonomic scope" value="Eukaryota"/>
</dbReference>
<dbReference type="GeneTree" id="ENSGT00940000160385"/>
<dbReference type="HOGENOM" id="CLU_039326_2_1_1"/>
<dbReference type="InParanoid" id="P00919"/>
<dbReference type="OMA" id="INPHWKV"/>
<dbReference type="OrthoDB" id="429145at2759"/>
<dbReference type="TreeFam" id="TF316425"/>
<dbReference type="Proteomes" id="UP000001811">
    <property type="component" value="Chromosome 3"/>
</dbReference>
<dbReference type="Bgee" id="ENSOCUG00000011742">
    <property type="expression patterns" value="Expressed in blood and 15 other cell types or tissues"/>
</dbReference>
<dbReference type="GO" id="GO:0045177">
    <property type="term" value="C:apical part of cell"/>
    <property type="evidence" value="ECO:0007669"/>
    <property type="project" value="TreeGrafter"/>
</dbReference>
<dbReference type="GO" id="GO:0005737">
    <property type="term" value="C:cytoplasm"/>
    <property type="evidence" value="ECO:0000250"/>
    <property type="project" value="UniProtKB"/>
</dbReference>
<dbReference type="GO" id="GO:0005886">
    <property type="term" value="C:plasma membrane"/>
    <property type="evidence" value="ECO:0000250"/>
    <property type="project" value="UniProtKB"/>
</dbReference>
<dbReference type="GO" id="GO:0004089">
    <property type="term" value="F:carbonate dehydratase activity"/>
    <property type="evidence" value="ECO:0007669"/>
    <property type="project" value="UniProtKB-EC"/>
</dbReference>
<dbReference type="GO" id="GO:0018820">
    <property type="term" value="F:cyanamide hydratase activity"/>
    <property type="evidence" value="ECO:0007669"/>
    <property type="project" value="RHEA"/>
</dbReference>
<dbReference type="GO" id="GO:0008270">
    <property type="term" value="F:zinc ion binding"/>
    <property type="evidence" value="ECO:0007669"/>
    <property type="project" value="InterPro"/>
</dbReference>
<dbReference type="GO" id="GO:0038166">
    <property type="term" value="P:angiotensin-activated signaling pathway"/>
    <property type="evidence" value="ECO:0000250"/>
    <property type="project" value="UniProtKB"/>
</dbReference>
<dbReference type="GO" id="GO:0015670">
    <property type="term" value="P:carbon dioxide transport"/>
    <property type="evidence" value="ECO:0007669"/>
    <property type="project" value="TreeGrafter"/>
</dbReference>
<dbReference type="GO" id="GO:2001150">
    <property type="term" value="P:positive regulation of dipeptide transmembrane transport"/>
    <property type="evidence" value="ECO:0000250"/>
    <property type="project" value="UniProtKB"/>
</dbReference>
<dbReference type="GO" id="GO:0051453">
    <property type="term" value="P:regulation of intracellular pH"/>
    <property type="evidence" value="ECO:0000250"/>
    <property type="project" value="UniProtKB"/>
</dbReference>
<dbReference type="GO" id="GO:0044070">
    <property type="term" value="P:regulation of monoatomic anion transport"/>
    <property type="evidence" value="ECO:0000250"/>
    <property type="project" value="UniProtKB"/>
</dbReference>
<dbReference type="FunFam" id="3.10.200.10:FF:000001">
    <property type="entry name" value="Carbonic anhydrase 2"/>
    <property type="match status" value="1"/>
</dbReference>
<dbReference type="Gene3D" id="3.10.200.10">
    <property type="entry name" value="Alpha carbonic anhydrase"/>
    <property type="match status" value="1"/>
</dbReference>
<dbReference type="InterPro" id="IPR001148">
    <property type="entry name" value="CA_dom"/>
</dbReference>
<dbReference type="InterPro" id="IPR036398">
    <property type="entry name" value="CA_dom_sf"/>
</dbReference>
<dbReference type="InterPro" id="IPR023561">
    <property type="entry name" value="Carbonic_anhydrase_a-class"/>
</dbReference>
<dbReference type="InterPro" id="IPR018338">
    <property type="entry name" value="Carbonic_anhydrase_a-class_CS"/>
</dbReference>
<dbReference type="PANTHER" id="PTHR18952">
    <property type="entry name" value="CARBONIC ANHYDRASE"/>
    <property type="match status" value="1"/>
</dbReference>
<dbReference type="PANTHER" id="PTHR18952:SF120">
    <property type="entry name" value="CARBONIC ANHYDRASE 2"/>
    <property type="match status" value="1"/>
</dbReference>
<dbReference type="Pfam" id="PF00194">
    <property type="entry name" value="Carb_anhydrase"/>
    <property type="match status" value="1"/>
</dbReference>
<dbReference type="SMART" id="SM01057">
    <property type="entry name" value="Carb_anhydrase"/>
    <property type="match status" value="1"/>
</dbReference>
<dbReference type="SUPFAM" id="SSF51069">
    <property type="entry name" value="Carbonic anhydrase"/>
    <property type="match status" value="1"/>
</dbReference>
<dbReference type="PROSITE" id="PS00162">
    <property type="entry name" value="ALPHA_CA_1"/>
    <property type="match status" value="1"/>
</dbReference>
<dbReference type="PROSITE" id="PS51144">
    <property type="entry name" value="ALPHA_CA_2"/>
    <property type="match status" value="1"/>
</dbReference>
<gene>
    <name type="primary">CA2</name>
</gene>
<proteinExistence type="evidence at protein level"/>
<feature type="initiator methionine" description="Removed" evidence="5">
    <location>
        <position position="1"/>
    </location>
</feature>
<feature type="chain" id="PRO_0000077420" description="Carbonic anhydrase 2">
    <location>
        <begin position="2"/>
        <end position="260"/>
    </location>
</feature>
<feature type="domain" description="Alpha-carbonic anhydrase" evidence="4">
    <location>
        <begin position="3"/>
        <end position="259"/>
    </location>
</feature>
<feature type="active site" description="Proton donor/acceptor" evidence="1">
    <location>
        <position position="64"/>
    </location>
</feature>
<feature type="binding site" evidence="1">
    <location>
        <position position="94"/>
    </location>
    <ligand>
        <name>Zn(2+)</name>
        <dbReference type="ChEBI" id="CHEBI:29105"/>
        <note>catalytic</note>
    </ligand>
</feature>
<feature type="binding site" evidence="1">
    <location>
        <position position="96"/>
    </location>
    <ligand>
        <name>Zn(2+)</name>
        <dbReference type="ChEBI" id="CHEBI:29105"/>
        <note>catalytic</note>
    </ligand>
</feature>
<feature type="binding site" evidence="1">
    <location>
        <position position="119"/>
    </location>
    <ligand>
        <name>Zn(2+)</name>
        <dbReference type="ChEBI" id="CHEBI:29105"/>
        <note>catalytic</note>
    </ligand>
</feature>
<feature type="binding site" evidence="1">
    <location>
        <begin position="198"/>
        <end position="199"/>
    </location>
    <ligand>
        <name>substrate</name>
    </ligand>
</feature>
<feature type="site" description="Fine-tunes the proton-transfer properties of H-64" evidence="1">
    <location>
        <position position="7"/>
    </location>
</feature>
<feature type="site" description="Fine-tunes the proton-transfer properties of H-64" evidence="1">
    <location>
        <position position="62"/>
    </location>
</feature>
<feature type="site" description="Fine-tunes the proton-transfer properties of H-64" evidence="1">
    <location>
        <position position="67"/>
    </location>
</feature>
<feature type="modified residue" description="N-acetylserine" evidence="1">
    <location>
        <position position="2"/>
    </location>
</feature>
<feature type="modified residue" description="Phosphoserine" evidence="3">
    <location>
        <position position="2"/>
    </location>
</feature>
<feature type="modified residue" description="Phosphoserine" evidence="1">
    <location>
        <position position="165"/>
    </location>
</feature>
<feature type="modified residue" description="Phosphoserine" evidence="1">
    <location>
        <position position="172"/>
    </location>
</feature>
<feature type="sequence variant">
    <original>E</original>
    <variation>Q</variation>
    <location>
        <position position="204"/>
    </location>
</feature>
<feature type="sequence conflict" description="In Ref. 1; AA sequence." evidence="6" ref="1">
    <original>N</original>
    <variation>D</variation>
    <location>
        <position position="24"/>
    </location>
</feature>
<feature type="sequence conflict" description="In Ref. 1; AA sequence." evidence="6" ref="1">
    <original>N</original>
    <variation>D</variation>
    <location>
        <position position="36"/>
    </location>
</feature>
<feature type="sequence conflict" description="In Ref. 1; AA sequence." evidence="6" ref="1">
    <original>C</original>
    <variation>S</variation>
    <location>
        <position position="50"/>
    </location>
</feature>
<feature type="sequence conflict" description="In Ref. 1; AA sequence." evidence="6" ref="1">
    <original>T</original>
    <variation>S</variation>
    <location>
        <position position="77"/>
    </location>
</feature>
<feature type="sequence conflict" description="In Ref. 1; AA sequence." evidence="6" ref="1">
    <original>Q</original>
    <variation>E</variation>
    <location>
        <position position="103"/>
    </location>
</feature>
<feature type="sequence conflict" description="In Ref. 1; AA sequence." evidence="6" ref="1">
    <original>D</original>
    <variation>N</variation>
    <location>
        <position position="177"/>
    </location>
</feature>
<name>CAH2_RABIT</name>
<organism>
    <name type="scientific">Oryctolagus cuniculus</name>
    <name type="common">Rabbit</name>
    <dbReference type="NCBI Taxonomy" id="9986"/>
    <lineage>
        <taxon>Eukaryota</taxon>
        <taxon>Metazoa</taxon>
        <taxon>Chordata</taxon>
        <taxon>Craniata</taxon>
        <taxon>Vertebrata</taxon>
        <taxon>Euteleostomi</taxon>
        <taxon>Mammalia</taxon>
        <taxon>Eutheria</taxon>
        <taxon>Euarchontoglires</taxon>
        <taxon>Glires</taxon>
        <taxon>Lagomorpha</taxon>
        <taxon>Leporidae</taxon>
        <taxon>Oryctolagus</taxon>
    </lineage>
</organism>
<evidence type="ECO:0000250" key="1">
    <source>
        <dbReference type="UniProtKB" id="P00918"/>
    </source>
</evidence>
<evidence type="ECO:0000250" key="2">
    <source>
        <dbReference type="UniProtKB" id="P00921"/>
    </source>
</evidence>
<evidence type="ECO:0000250" key="3">
    <source>
        <dbReference type="UniProtKB" id="P27139"/>
    </source>
</evidence>
<evidence type="ECO:0000255" key="4">
    <source>
        <dbReference type="PROSITE-ProRule" id="PRU01134"/>
    </source>
</evidence>
<evidence type="ECO:0000269" key="5">
    <source>
    </source>
</evidence>
<evidence type="ECO:0000305" key="6"/>
<comment type="function">
    <text evidence="1">Catalyzes the reversible hydration of carbon dioxide. Can also hydrate cyanamide to urea (By similarity). Involved in the regulation of fluid secretion into the anterior chamber of the eye. Essential for bone resorption and osteoclast differentiation. Contributes to intracellular pH regulation in the duodenal upper villous epithelium during proton-coupled peptide absorption. Stimulates the chloride-bicarbonate exchange activity of SLC26A6.</text>
</comment>
<comment type="catalytic activity">
    <reaction evidence="1">
        <text>hydrogencarbonate + H(+) = CO2 + H2O</text>
        <dbReference type="Rhea" id="RHEA:10748"/>
        <dbReference type="ChEBI" id="CHEBI:15377"/>
        <dbReference type="ChEBI" id="CHEBI:15378"/>
        <dbReference type="ChEBI" id="CHEBI:16526"/>
        <dbReference type="ChEBI" id="CHEBI:17544"/>
        <dbReference type="EC" id="4.2.1.1"/>
    </reaction>
</comment>
<comment type="catalytic activity">
    <reaction evidence="1">
        <text>urea = cyanamide + H2O</text>
        <dbReference type="Rhea" id="RHEA:23056"/>
        <dbReference type="ChEBI" id="CHEBI:15377"/>
        <dbReference type="ChEBI" id="CHEBI:16199"/>
        <dbReference type="ChEBI" id="CHEBI:16698"/>
        <dbReference type="EC" id="4.2.1.69"/>
    </reaction>
</comment>
<comment type="cofactor">
    <cofactor evidence="2">
        <name>Zn(2+)</name>
        <dbReference type="ChEBI" id="CHEBI:29105"/>
    </cofactor>
</comment>
<comment type="activity regulation">
    <text evidence="1">Inhibited by acetazolamide.</text>
</comment>
<comment type="subunit">
    <text evidence="1">Interacts with SLC4A4 and SLC26A6. Interaction with SLC4A7 regulates SLC4A7 transporter activity (By similarity).</text>
</comment>
<comment type="subcellular location">
    <subcellularLocation>
        <location evidence="1">Cytoplasm</location>
    </subcellularLocation>
    <subcellularLocation>
        <location evidence="1">Cell membrane</location>
    </subcellularLocation>
    <text evidence="1">Colocalized with SLC26A6 at the surface of the cell membrane in order to form a bicarbonate transport metabolon. Displaced from the cytosolic surface of the cell membrane by PKC in phorbol myristate acetate (PMA)-induced cells (By similarity).</text>
</comment>
<comment type="similarity">
    <text evidence="6">Belongs to the alpha-carbonic anhydrase family.</text>
</comment>
<reference key="1">
    <citation type="journal article" date="1978" name="Biochim. Biophys. Acta">
        <title>Amino acid sequence of rabbit carbonic anhydrase II.</title>
        <authorList>
            <person name="Ferrell R.E."/>
            <person name="Stroup S.K."/>
            <person name="Tanis R.J."/>
            <person name="Tashian R.E."/>
        </authorList>
    </citation>
    <scope>PROTEIN SEQUENCE OF 2-260</scope>
</reference>
<reference key="2">
    <citation type="journal article" date="1993" name="Am. J. Physiol.">
        <title>Carbonic anhydrase II mRNA is induced in rabbit kidney cortex during chronic metabolic acidosis.</title>
        <authorList>
            <person name="Schwartz G.J."/>
            <person name="Winkler C.A."/>
            <person name="Zavilowitz B.J."/>
            <person name="Bargiello T."/>
        </authorList>
    </citation>
    <scope>NUCLEOTIDE SEQUENCE [MRNA] OF 8-239</scope>
    <source>
        <strain>New Zealand white</strain>
        <tissue>Kidney</tissue>
    </source>
</reference>
<keyword id="KW-0007">Acetylation</keyword>
<keyword id="KW-1003">Cell membrane</keyword>
<keyword id="KW-0963">Cytoplasm</keyword>
<keyword id="KW-0903">Direct protein sequencing</keyword>
<keyword id="KW-0456">Lyase</keyword>
<keyword id="KW-0472">Membrane</keyword>
<keyword id="KW-0479">Metal-binding</keyword>
<keyword id="KW-0597">Phosphoprotein</keyword>
<keyword id="KW-1185">Reference proteome</keyword>
<keyword id="KW-0862">Zinc</keyword>